<sequence>MITSNDFKNGMTIEVDGEVYSIVEFQHVKPGKGAAFVRTKLRHMKSGNVSEKTFRAGEKVKRAHLEEREMQFLYAAGDMYNFMDTESFEQYTLTKDQLEDKTQFIKENMIITVLFHNGEEISIELPVFVELAVSETEPGVKGDTASGGSKPATLETGATVNVPFFINEGDIIKVDTRTSEYIERVKGE</sequence>
<organism>
    <name type="scientific">Natranaerobius thermophilus (strain ATCC BAA-1301 / DSM 18059 / JW/NM-WN-LF)</name>
    <dbReference type="NCBI Taxonomy" id="457570"/>
    <lineage>
        <taxon>Bacteria</taxon>
        <taxon>Bacillati</taxon>
        <taxon>Bacillota</taxon>
        <taxon>Clostridia</taxon>
        <taxon>Natranaerobiales</taxon>
        <taxon>Natranaerobiaceae</taxon>
        <taxon>Natranaerobius</taxon>
    </lineage>
</organism>
<proteinExistence type="inferred from homology"/>
<protein>
    <recommendedName>
        <fullName evidence="1">Elongation factor P</fullName>
        <shortName evidence="1">EF-P</shortName>
    </recommendedName>
</protein>
<gene>
    <name evidence="1" type="primary">efp</name>
    <name type="ordered locus">Nther_1717</name>
</gene>
<dbReference type="EMBL" id="CP001034">
    <property type="protein sequence ID" value="ACB85291.1"/>
    <property type="molecule type" value="Genomic_DNA"/>
</dbReference>
<dbReference type="RefSeq" id="WP_012448158.1">
    <property type="nucleotide sequence ID" value="NC_010718.1"/>
</dbReference>
<dbReference type="SMR" id="B2A549"/>
<dbReference type="FunCoup" id="B2A549">
    <property type="interactions" value="424"/>
</dbReference>
<dbReference type="STRING" id="457570.Nther_1717"/>
<dbReference type="KEGG" id="nth:Nther_1717"/>
<dbReference type="eggNOG" id="COG0231">
    <property type="taxonomic scope" value="Bacteria"/>
</dbReference>
<dbReference type="HOGENOM" id="CLU_074944_0_1_9"/>
<dbReference type="InParanoid" id="B2A549"/>
<dbReference type="OrthoDB" id="9801844at2"/>
<dbReference type="UniPathway" id="UPA00345"/>
<dbReference type="Proteomes" id="UP000001683">
    <property type="component" value="Chromosome"/>
</dbReference>
<dbReference type="GO" id="GO:0005737">
    <property type="term" value="C:cytoplasm"/>
    <property type="evidence" value="ECO:0007669"/>
    <property type="project" value="UniProtKB-SubCell"/>
</dbReference>
<dbReference type="GO" id="GO:0003746">
    <property type="term" value="F:translation elongation factor activity"/>
    <property type="evidence" value="ECO:0007669"/>
    <property type="project" value="UniProtKB-UniRule"/>
</dbReference>
<dbReference type="GO" id="GO:0043043">
    <property type="term" value="P:peptide biosynthetic process"/>
    <property type="evidence" value="ECO:0007669"/>
    <property type="project" value="InterPro"/>
</dbReference>
<dbReference type="CDD" id="cd04470">
    <property type="entry name" value="S1_EF-P_repeat_1"/>
    <property type="match status" value="1"/>
</dbReference>
<dbReference type="CDD" id="cd05794">
    <property type="entry name" value="S1_EF-P_repeat_2"/>
    <property type="match status" value="1"/>
</dbReference>
<dbReference type="FunFam" id="2.30.30.30:FF:000003">
    <property type="entry name" value="Elongation factor P"/>
    <property type="match status" value="1"/>
</dbReference>
<dbReference type="FunFam" id="2.40.50.140:FF:000004">
    <property type="entry name" value="Elongation factor P"/>
    <property type="match status" value="1"/>
</dbReference>
<dbReference type="FunFam" id="2.40.50.140:FF:000009">
    <property type="entry name" value="Elongation factor P"/>
    <property type="match status" value="1"/>
</dbReference>
<dbReference type="Gene3D" id="2.30.30.30">
    <property type="match status" value="1"/>
</dbReference>
<dbReference type="Gene3D" id="2.40.50.140">
    <property type="entry name" value="Nucleic acid-binding proteins"/>
    <property type="match status" value="2"/>
</dbReference>
<dbReference type="HAMAP" id="MF_00141">
    <property type="entry name" value="EF_P"/>
    <property type="match status" value="1"/>
</dbReference>
<dbReference type="InterPro" id="IPR015365">
    <property type="entry name" value="Elong-fact-P_C"/>
</dbReference>
<dbReference type="InterPro" id="IPR012340">
    <property type="entry name" value="NA-bd_OB-fold"/>
</dbReference>
<dbReference type="InterPro" id="IPR014722">
    <property type="entry name" value="Rib_uL2_dom2"/>
</dbReference>
<dbReference type="InterPro" id="IPR020599">
    <property type="entry name" value="Transl_elong_fac_P/YeiP"/>
</dbReference>
<dbReference type="InterPro" id="IPR013185">
    <property type="entry name" value="Transl_elong_KOW-like"/>
</dbReference>
<dbReference type="InterPro" id="IPR001059">
    <property type="entry name" value="Transl_elong_P/YeiP_cen"/>
</dbReference>
<dbReference type="InterPro" id="IPR013852">
    <property type="entry name" value="Transl_elong_P/YeiP_CS"/>
</dbReference>
<dbReference type="InterPro" id="IPR011768">
    <property type="entry name" value="Transl_elongation_fac_P"/>
</dbReference>
<dbReference type="InterPro" id="IPR008991">
    <property type="entry name" value="Translation_prot_SH3-like_sf"/>
</dbReference>
<dbReference type="NCBIfam" id="TIGR00038">
    <property type="entry name" value="efp"/>
    <property type="match status" value="1"/>
</dbReference>
<dbReference type="NCBIfam" id="NF001810">
    <property type="entry name" value="PRK00529.1"/>
    <property type="match status" value="1"/>
</dbReference>
<dbReference type="PANTHER" id="PTHR30053">
    <property type="entry name" value="ELONGATION FACTOR P"/>
    <property type="match status" value="1"/>
</dbReference>
<dbReference type="PANTHER" id="PTHR30053:SF12">
    <property type="entry name" value="ELONGATION FACTOR P (EF-P) FAMILY PROTEIN"/>
    <property type="match status" value="1"/>
</dbReference>
<dbReference type="Pfam" id="PF01132">
    <property type="entry name" value="EFP"/>
    <property type="match status" value="1"/>
</dbReference>
<dbReference type="Pfam" id="PF08207">
    <property type="entry name" value="EFP_N"/>
    <property type="match status" value="1"/>
</dbReference>
<dbReference type="Pfam" id="PF09285">
    <property type="entry name" value="Elong-fact-P_C"/>
    <property type="match status" value="1"/>
</dbReference>
<dbReference type="PIRSF" id="PIRSF005901">
    <property type="entry name" value="EF-P"/>
    <property type="match status" value="1"/>
</dbReference>
<dbReference type="SMART" id="SM01185">
    <property type="entry name" value="EFP"/>
    <property type="match status" value="1"/>
</dbReference>
<dbReference type="SMART" id="SM00841">
    <property type="entry name" value="Elong-fact-P_C"/>
    <property type="match status" value="1"/>
</dbReference>
<dbReference type="SUPFAM" id="SSF50249">
    <property type="entry name" value="Nucleic acid-binding proteins"/>
    <property type="match status" value="2"/>
</dbReference>
<dbReference type="SUPFAM" id="SSF50104">
    <property type="entry name" value="Translation proteins SH3-like domain"/>
    <property type="match status" value="1"/>
</dbReference>
<dbReference type="PROSITE" id="PS01275">
    <property type="entry name" value="EFP"/>
    <property type="match status" value="1"/>
</dbReference>
<name>EFP_NATTJ</name>
<reference key="1">
    <citation type="submission" date="2008-04" db="EMBL/GenBank/DDBJ databases">
        <title>Complete sequence of chromosome of Natranaerobius thermophilus JW/NM-WN-LF.</title>
        <authorList>
            <consortium name="US DOE Joint Genome Institute"/>
            <person name="Copeland A."/>
            <person name="Lucas S."/>
            <person name="Lapidus A."/>
            <person name="Glavina del Rio T."/>
            <person name="Dalin E."/>
            <person name="Tice H."/>
            <person name="Bruce D."/>
            <person name="Goodwin L."/>
            <person name="Pitluck S."/>
            <person name="Chertkov O."/>
            <person name="Brettin T."/>
            <person name="Detter J.C."/>
            <person name="Han C."/>
            <person name="Kuske C.R."/>
            <person name="Schmutz J."/>
            <person name="Larimer F."/>
            <person name="Land M."/>
            <person name="Hauser L."/>
            <person name="Kyrpides N."/>
            <person name="Lykidis A."/>
            <person name="Mesbah N.M."/>
            <person name="Wiegel J."/>
        </authorList>
    </citation>
    <scope>NUCLEOTIDE SEQUENCE [LARGE SCALE GENOMIC DNA]</scope>
    <source>
        <strain>ATCC BAA-1301 / DSM 18059 / JW/NM-WN-LF</strain>
    </source>
</reference>
<keyword id="KW-0963">Cytoplasm</keyword>
<keyword id="KW-0251">Elongation factor</keyword>
<keyword id="KW-0648">Protein biosynthesis</keyword>
<keyword id="KW-1185">Reference proteome</keyword>
<evidence type="ECO:0000255" key="1">
    <source>
        <dbReference type="HAMAP-Rule" id="MF_00141"/>
    </source>
</evidence>
<accession>B2A549</accession>
<comment type="function">
    <text evidence="1">Involved in peptide bond synthesis. Stimulates efficient translation and peptide-bond synthesis on native or reconstituted 70S ribosomes in vitro. Probably functions indirectly by altering the affinity of the ribosome for aminoacyl-tRNA, thus increasing their reactivity as acceptors for peptidyl transferase.</text>
</comment>
<comment type="pathway">
    <text evidence="1">Protein biosynthesis; polypeptide chain elongation.</text>
</comment>
<comment type="subcellular location">
    <subcellularLocation>
        <location evidence="1">Cytoplasm</location>
    </subcellularLocation>
</comment>
<comment type="similarity">
    <text evidence="1">Belongs to the elongation factor P family.</text>
</comment>
<feature type="chain" id="PRO_1000117902" description="Elongation factor P">
    <location>
        <begin position="1"/>
        <end position="188"/>
    </location>
</feature>